<feature type="chain" id="PRO_0000085783" description="Cyclin-dependent kinase 5">
    <location>
        <begin position="1"/>
        <end position="292"/>
    </location>
</feature>
<feature type="domain" description="Protein kinase" evidence="5">
    <location>
        <begin position="4"/>
        <end position="286"/>
    </location>
</feature>
<feature type="active site" description="Proton acceptor" evidence="5 6">
    <location>
        <position position="126"/>
    </location>
</feature>
<feature type="binding site" evidence="5">
    <location>
        <begin position="10"/>
        <end position="18"/>
    </location>
    <ligand>
        <name>ATP</name>
        <dbReference type="ChEBI" id="CHEBI:30616"/>
    </ligand>
</feature>
<feature type="binding site" evidence="5">
    <location>
        <position position="33"/>
    </location>
    <ligand>
        <name>ATP</name>
        <dbReference type="ChEBI" id="CHEBI:30616"/>
    </ligand>
</feature>
<feature type="modified residue" description="Phosphotyrosine; by ABL1, EPHA4 and FYN" evidence="3">
    <location>
        <position position="15"/>
    </location>
</feature>
<feature type="modified residue" description="Phosphothreonine" evidence="3">
    <location>
        <position position="17"/>
    </location>
</feature>
<feature type="modified residue" description="N6-acetyllysine" evidence="3">
    <location>
        <position position="56"/>
    </location>
</feature>
<feature type="modified residue" description="Phosphoserine" evidence="3">
    <location>
        <position position="72"/>
    </location>
</feature>
<feature type="modified residue" description="Phosphoserine" evidence="3">
    <location>
        <position position="159"/>
    </location>
</feature>
<feature type="sequence conflict" description="In Ref. 3; AAI20084." evidence="9" ref="3">
    <original>K</original>
    <variation>E</variation>
    <location>
        <position position="61"/>
    </location>
</feature>
<feature type="sequence conflict" description="In Ref. 3; AAI20084." evidence="9" ref="3">
    <original>F</original>
    <variation>L</variation>
    <location>
        <position position="151"/>
    </location>
</feature>
<feature type="sequence conflict" description="In Ref. 1; AAA30606." evidence="9" ref="1">
    <original>P</original>
    <variation>S</variation>
    <location>
        <position position="169"/>
    </location>
</feature>
<sequence length="292" mass="33288">MQKYEKLEKIGEGTYGTVFKAKNRETHEIVALKRVRLDDDDEGVPSSALREICLLKELKHKNIVRLHDVLHSDKKLTLVFEFCDQDLKKYFDSCNGDLDPEIVKSFLFQLLKGLGFCHSRNVLHRDLKPQNLLINRNGELKLADFGLARAFGIPVRCYSAEVVTLWYRPPDVLFGAKLYSTSIDMWSAGCIFAELANAGRPLFPGNDVDDQLKRIFRLLGTPTEEQWPAMTKLPDYKPYPMYPATTSLVNVVPKLNATGRDLLQNLLKCNPVQRISAEEALQHPYFSDFCPP</sequence>
<organism>
    <name type="scientific">Bos taurus</name>
    <name type="common">Bovine</name>
    <dbReference type="NCBI Taxonomy" id="9913"/>
    <lineage>
        <taxon>Eukaryota</taxon>
        <taxon>Metazoa</taxon>
        <taxon>Chordata</taxon>
        <taxon>Craniata</taxon>
        <taxon>Vertebrata</taxon>
        <taxon>Euteleostomi</taxon>
        <taxon>Mammalia</taxon>
        <taxon>Eutheria</taxon>
        <taxon>Laurasiatheria</taxon>
        <taxon>Artiodactyla</taxon>
        <taxon>Ruminantia</taxon>
        <taxon>Pecora</taxon>
        <taxon>Bovidae</taxon>
        <taxon>Bovinae</taxon>
        <taxon>Bos</taxon>
    </lineage>
</organism>
<proteinExistence type="evidence at protein level"/>
<evidence type="ECO:0000250" key="1"/>
<evidence type="ECO:0000250" key="2">
    <source>
        <dbReference type="UniProtKB" id="P49615"/>
    </source>
</evidence>
<evidence type="ECO:0000250" key="3">
    <source>
        <dbReference type="UniProtKB" id="Q00535"/>
    </source>
</evidence>
<evidence type="ECO:0000250" key="4">
    <source>
        <dbReference type="UniProtKB" id="Q03114"/>
    </source>
</evidence>
<evidence type="ECO:0000255" key="5">
    <source>
        <dbReference type="PROSITE-ProRule" id="PRU00159"/>
    </source>
</evidence>
<evidence type="ECO:0000255" key="6">
    <source>
        <dbReference type="PROSITE-ProRule" id="PRU10027"/>
    </source>
</evidence>
<evidence type="ECO:0000303" key="7">
    <source>
    </source>
</evidence>
<evidence type="ECO:0000303" key="8">
    <source>
    </source>
</evidence>
<evidence type="ECO:0000305" key="9"/>
<comment type="function">
    <text evidence="1 4">Proline-directed serine/threonine-protein kinase essential for neuronal cell cycle arrest and differentiation and may be involved in apoptotic cell death in neuronal diseases by triggering abortive cell cycle re-entry. Interacts with D1 and D3-type G1 cyclins. Phosphorylates SRC, NOS3, VIM/vimentin, p35/CDK5R1, MEF2A, SIPA1L1, SH3GLB1, PXN, PAK1, MCAM/MUC18, SEPT5, SYN1, DNM1, AMPH, SYNJ1, CDK16, RAC1, RHOA, CDC42, TONEBP/NFAT5, MAPT/TAU, MAP1B, histone H1, p53/TP53, HDAC1, APEX1, PTK2/FAK1, huntingtin/HTT, ATM, MAP2, NEFH and NEFM. Regulates several neuronal development and physiological processes including neuronal survival, migration and differentiation, axonal and neurite growth, synaptogenesis, oligodendrocyte differentiation, synaptic plasticity and neurotransmission, by phosphorylating key proteins. Negatively regulates the CACNA1B/CAV2.2 -mediated Ca(2+) release probability at hippocampal neuronal soma and synaptic terminals (By similarity). Activated by interaction with CDK5R1 (p35) and CDK5R2 (p39), especially in postmitotic neurons, and promotes CDK5R1 (p35) expression in an autostimulation loop. Phosphorylates many downstream substrates such as Rho and Ras family small GTPases (e.g. PAK1, RAC1, RHOA, CDC42) or microtubule-binding proteins (e.g. MAPT/TAU, MAP2, MAP1B), and modulates actin dynamics to regulate neurite growth and/or spine morphogenesis. Also phosphorylates exocytosis associated proteins such as MCAM/MUC18, SEPT5, SYN1, and CDK16/PCTAIRE1 as well as endocytosis associated proteins such as DNM1, AMPH and SYNJ1 at synaptic terminals. In the mature central nervous system (CNS), regulates neurotransmitter movements by phosphorylating substrates associated with neurotransmitter release and synapse plasticity; synaptic vesicle exocytosis, vesicles fusion with the presynaptic membrane, and endocytosis. Promotes cell survival by activating anti-apoptotic proteins BCL2 and STAT3, and negatively regulating of JNK3/MAPK10 activity. Phosphorylation of p53/TP53 in response to genotoxic and oxidative stresses enhances its stabilization by preventing ubiquitin ligase-mediated proteasomal degradation, and induces transactivation of p53/TP53 target genes, thus regulating apoptosis. Phosphorylation of p35/CDK5R1 enhances its stabilization by preventing calpain-mediated proteolysis producing p25/CDK5R1 and avoiding ubiquitin ligase-mediated proteasomal degradation. During aberrant cell-cycle activity and DNA damage, p25/CDK5 activity elicits cell-cycle activity and double-strand DNA breaks that precedes neuronal death by deregulating HDAC1. DNA damage triggered phosphorylation of huntingtin/HTT in nuclei of neurons protects neurons against polyglutamine expansion as well as DNA damage mediated toxicity. Phosphorylation of PXN reduces its interaction with PTK2/FAK1 in matrix-cell focal adhesions (MCFA) during oligodendrocytes (OLs) differentiation. Negative regulator of Wnt/beta-catenin signaling pathway. Activator of the GAIT (IFN-gamma-activated inhibitor of translation) pathway, which suppresses expression of a post-transcriptional regulon of proinflammatory genes in myeloid cells; phosphorylates the linker domain of glutamyl-prolyl tRNA synthetase (EPRS) in a IFN-gamma-dependent manner, the initial event in assembly of the GAIT complex. Phosphorylation of SH3GLB1 is required for autophagy induction in starved neurons. Phosphorylation of TONEBP/NFAT5 in response to osmotic stress mediates its rapid nuclear localization. MEF2 is inactivated by phosphorylation in nucleus in response to neurotoxin, thus leading to neuronal apoptosis. APEX1 AP-endodeoxyribonuclease is repressed by phosphorylation, resulting in accumulation of DNA damage and contributing to neuronal death. NOS3 phosphorylation down regulates NOS3-derived nitrite (NO) levels. SRC phosphorylation mediates its ubiquitin-dependent degradation and thus leads to cytoskeletal reorganization. May regulate endothelial cell migration and angiogenesis via the modulation of lamellipodia formation. Involved in dendritic spine morphogenesis by mediating the EFNA1-EPHA4 signaling. The complex p35/CDK5 participates in the regulation of the circadian clock by modulating the function of CLOCK protein: phosphorylates CLOCK at 'Thr-451' and 'Thr-461' and regulates the transcriptional activity of the CLOCK-BMAL1 heterodimer in association with altered stability and subcellular distribution (By similarity).</text>
</comment>
<comment type="catalytic activity">
    <reaction>
        <text>L-seryl-[protein] + ATP = O-phospho-L-seryl-[protein] + ADP + H(+)</text>
        <dbReference type="Rhea" id="RHEA:17989"/>
        <dbReference type="Rhea" id="RHEA-COMP:9863"/>
        <dbReference type="Rhea" id="RHEA-COMP:11604"/>
        <dbReference type="ChEBI" id="CHEBI:15378"/>
        <dbReference type="ChEBI" id="CHEBI:29999"/>
        <dbReference type="ChEBI" id="CHEBI:30616"/>
        <dbReference type="ChEBI" id="CHEBI:83421"/>
        <dbReference type="ChEBI" id="CHEBI:456216"/>
        <dbReference type="EC" id="2.7.11.1"/>
    </reaction>
</comment>
<comment type="catalytic activity">
    <reaction>
        <text>L-threonyl-[protein] + ATP = O-phospho-L-threonyl-[protein] + ADP + H(+)</text>
        <dbReference type="Rhea" id="RHEA:46608"/>
        <dbReference type="Rhea" id="RHEA-COMP:11060"/>
        <dbReference type="Rhea" id="RHEA-COMP:11605"/>
        <dbReference type="ChEBI" id="CHEBI:15378"/>
        <dbReference type="ChEBI" id="CHEBI:30013"/>
        <dbReference type="ChEBI" id="CHEBI:30616"/>
        <dbReference type="ChEBI" id="CHEBI:61977"/>
        <dbReference type="ChEBI" id="CHEBI:456216"/>
        <dbReference type="EC" id="2.7.11.1"/>
    </reaction>
</comment>
<comment type="activity regulation">
    <text evidence="1">Inhibited by 2-(1-ethyl-2-hydroxyethylamino)-6-benzylamino-9-isopropylpurine (roscovitine), 1-isopropyl-4-aminobenzyl-6-ether-linked benzimidazoles, resveratrol, AT-7519 and olomoucine. Activated by CDK5R1 (p35) and CDK5R2 (p39) during the development of the nervous system; degradation of CDK5R1 (p35) and CDK5R2 (p39) by proteasome result in down regulation of kinase activity, during this process, CDK5 phosphorylates p35 and induces its ubiquitination and subsequent degradation. Kinase activity is mainly determined by the amount of p35 available and subcellular location; reversible association to plasma membrane inhibits activity. Long-term inactivation as well as CDK5R1 (p25)-mediated hyperactivation of CDK5 triggers cell death. The pro-death activity of hyperactivated CDK5 is suppressed by membrane association of CDK5, via myristoylation of p35. Brain-derived neurotrophic factor, glial-derived neurotrophic factor, nerve growth factor (NGF), retinoic acid, laminin and neuregulin promote activity. Neurotoxicity enhances nuclear activity, thus leading to MEF2 phosphorylation and inhibition prior to apoptosis of cortical neurons. Repression by GSTP1 via p25/p35 translocation prevents neurodegeneration (By similarity).</text>
</comment>
<comment type="subunit">
    <text evidence="1">Heterodimer composed of a catalytic subunit CDK5 and a regulatory subunit CDK5R1 (p25) and macromolecular complex composed of at least CDK5, CDK5R1 (p35) and CDK5RAP1 or CDK5RAP2 or CDK5RAP3. Only the heterodimer shows kinase activity. Under neurotoxic stress and neuronal injury conditions, p35 is cleaved by calpain to generate p25 that hyperactivates CDK5, that becomes functionally disabled and often toxic. Found in a trimolecular complex with CABLES1 and ABL1. Interacts with CABLES1 and CABLES2 (By similarity). Interacts with AATK and GSTP1. Binds to HDAC1 when in complex with p25. Interaction with myristoylation p35 promotes CDK5 association with membranes. Both isoforms 1 and 2 interacts with beta-catenin/CTNNB1. Interacts with delta-catenin/CTNND2 and APEX1. Interacts with P53/TP53 in neurons (By similarity). Interacts with EPHA4; may mediate the activation of NGEF by EPHA4. Interacts with PTK2/FAK1. The complex p35/CDK5 interacts with CLOCK (By similarity).</text>
</comment>
<comment type="subcellular location">
    <subcellularLocation>
        <location evidence="3">Nucleus</location>
    </subcellularLocation>
    <subcellularLocation>
        <location evidence="2">Cytoplasm</location>
    </subcellularLocation>
    <subcellularLocation>
        <location evidence="3">Cell membrane</location>
        <topology evidence="1">Peripheral membrane protein</topology>
    </subcellularLocation>
    <subcellularLocation>
        <location evidence="1">Perikaryon</location>
    </subcellularLocation>
    <subcellularLocation>
        <location evidence="2">Cell projection</location>
        <location evidence="2">Lamellipodium</location>
    </subcellularLocation>
    <subcellularLocation>
        <location evidence="2">Cell projection</location>
        <location evidence="2">Growth cone</location>
    </subcellularLocation>
    <subcellularLocation>
        <location evidence="1">Nucleus</location>
    </subcellularLocation>
    <subcellularLocation>
        <location evidence="4">Postsynaptic density</location>
    </subcellularLocation>
    <subcellularLocation>
        <location evidence="4">Synapse</location>
    </subcellularLocation>
    <text evidence="1">In axonal growth cone with extension to the peripheral lamellipodia (By similarity). Under neurotoxic stress and neuronal injury conditions, CDK5R1 (p35) is cleaved by calpain to generate CDK5R1 (p25) in response to increased intracellular calcium. The elevated level of p25, when in complex with CDK5, leads to its subcellular misallocation as well as its hyperactivation. Colocalizes with CTNND2 in the cell body of neuronal cells, and with CTNNB1 in the cell-cell contacts and plasma membrane of undifferentiated and differentiated neuroblastoma cells. Reversibly attached to the plasma membrane in an inactive form when complexed to dephosphorylated p35 or CDK5R2 (p39), p35 phosphorylation releases this attachment and activates CDK5 (By similarity).</text>
</comment>
<comment type="PTM">
    <text evidence="1">Phosphorylation on Tyr-15 by ABL1 and FYN, and on Ser-159 by casein kinase 1 promotes kinase activity. By contrast, phosphorylation at Thr-14 inhibits activity (By similarity).</text>
</comment>
<comment type="PTM">
    <text evidence="1">Phosphorylation at Ser-159 is essential for maximal catalytic activity.</text>
</comment>
<comment type="similarity">
    <text evidence="9">Belongs to the protein kinase superfamily. CMGC Ser/Thr protein kinase family. CDC2/CDKX subfamily.</text>
</comment>
<keyword id="KW-0007">Acetylation</keyword>
<keyword id="KW-0053">Apoptosis</keyword>
<keyword id="KW-0067">ATP-binding</keyword>
<keyword id="KW-0090">Biological rhythms</keyword>
<keyword id="KW-0131">Cell cycle</keyword>
<keyword id="KW-0132">Cell division</keyword>
<keyword id="KW-1003">Cell membrane</keyword>
<keyword id="KW-0966">Cell projection</keyword>
<keyword id="KW-0963">Cytoplasm</keyword>
<keyword id="KW-0903">Direct protein sequencing</keyword>
<keyword id="KW-0418">Kinase</keyword>
<keyword id="KW-0472">Membrane</keyword>
<keyword id="KW-0523">Neurodegeneration</keyword>
<keyword id="KW-0524">Neurogenesis</keyword>
<keyword id="KW-0547">Nucleotide-binding</keyword>
<keyword id="KW-0539">Nucleus</keyword>
<keyword id="KW-0597">Phosphoprotein</keyword>
<keyword id="KW-1185">Reference proteome</keyword>
<keyword id="KW-0723">Serine/threonine-protein kinase</keyword>
<keyword id="KW-0770">Synapse</keyword>
<keyword id="KW-0808">Transferase</keyword>
<reference key="1">
    <citation type="journal article" date="1992" name="J. Biol. Chem.">
        <title>Brain proline-directed protein kinase is a neurofilament kinase which displays high sequence homology to p34cdc2.</title>
        <authorList>
            <person name="Lew J."/>
            <person name="Winkfein R.J."/>
            <person name="Paudel H.K."/>
            <person name="Wang J.H."/>
        </authorList>
    </citation>
    <scope>NUCLEOTIDE SEQUENCE [MRNA]</scope>
    <scope>PROTEIN SEQUENCE OF 14-20 AND 218-251</scope>
    <source>
        <tissue>Brain</tissue>
    </source>
</reference>
<reference key="2">
    <citation type="journal article" date="1993" name="FEBS Lett.">
        <title>A cdc2-related kinase PSSALRE/cdk5 is homologous with the 30 kDa subunit of tau protein kinase II, a proline-directed protein kinase associated with microtubule.</title>
        <authorList>
            <person name="Kobayashi S."/>
            <person name="Ishiguro K."/>
            <person name="Omori A."/>
            <person name="Takamatsu M."/>
            <person name="Arioka M."/>
            <person name="Imahori K."/>
            <person name="Uchida T."/>
        </authorList>
    </citation>
    <scope>NUCLEOTIDE SEQUENCE [MRNA]</scope>
    <source>
        <tissue>Brain</tissue>
    </source>
</reference>
<reference key="3">
    <citation type="submission" date="2006-08" db="EMBL/GenBank/DDBJ databases">
        <authorList>
            <consortium name="NIH - Mammalian Gene Collection (MGC) project"/>
        </authorList>
    </citation>
    <scope>NUCLEOTIDE SEQUENCE [LARGE SCALE MRNA]</scope>
    <source>
        <strain>Hereford</strain>
        <tissue>Fetal cerebellum</tissue>
    </source>
</reference>
<protein>
    <recommendedName>
        <fullName evidence="3">Cyclin-dependent kinase 5</fullName>
        <ecNumber>2.7.11.1</ecNumber>
    </recommendedName>
    <alternativeName>
        <fullName evidence="9">Cell division protein kinase 5</fullName>
    </alternativeName>
    <alternativeName>
        <fullName>Cyclin-dependent-like kinase 5</fullName>
    </alternativeName>
    <alternativeName>
        <fullName evidence="7">Proline-directed protein kinase 33 kDa subunit</fullName>
        <shortName evidence="7">PDPK</shortName>
    </alternativeName>
    <alternativeName>
        <fullName evidence="4">Serine/threonine-protein kinase PSSALRE</fullName>
    </alternativeName>
    <alternativeName>
        <fullName evidence="8">Tau protein kinase II catalytic subunit</fullName>
        <shortName evidence="8">TPKII catalytic subunit</shortName>
    </alternativeName>
</protein>
<gene>
    <name evidence="3" type="primary">CDK5</name>
    <name evidence="3" type="synonym">CDKN5</name>
    <name evidence="2" type="synonym">PSSALRE</name>
</gene>
<name>CDK5_BOVIN</name>
<dbReference type="EC" id="2.7.11.1"/>
<dbReference type="EMBL" id="L04798">
    <property type="protein sequence ID" value="AAA30606.1"/>
    <property type="molecule type" value="mRNA"/>
</dbReference>
<dbReference type="EMBL" id="X82440">
    <property type="protein sequence ID" value="CAA57821.1"/>
    <property type="molecule type" value="mRNA"/>
</dbReference>
<dbReference type="EMBL" id="BC120083">
    <property type="protein sequence ID" value="AAI20084.1"/>
    <property type="molecule type" value="mRNA"/>
</dbReference>
<dbReference type="RefSeq" id="NP_776442.1">
    <property type="nucleotide sequence ID" value="NM_174017.2"/>
</dbReference>
<dbReference type="RefSeq" id="XP_059741373.1">
    <property type="nucleotide sequence ID" value="XM_059885390.1"/>
</dbReference>
<dbReference type="SMR" id="Q02399"/>
<dbReference type="BioGRID" id="158435">
    <property type="interactions" value="2"/>
</dbReference>
<dbReference type="CORUM" id="Q02399"/>
<dbReference type="FunCoup" id="Q02399">
    <property type="interactions" value="2727"/>
</dbReference>
<dbReference type="IntAct" id="Q02399">
    <property type="interactions" value="3"/>
</dbReference>
<dbReference type="STRING" id="9913.ENSBTAP00000010212"/>
<dbReference type="BindingDB" id="Q02399"/>
<dbReference type="ChEMBL" id="CHEMBL5169144"/>
<dbReference type="iPTMnet" id="Q02399"/>
<dbReference type="PaxDb" id="9913-ENSBTAP00000010212"/>
<dbReference type="GeneID" id="281066"/>
<dbReference type="KEGG" id="bta:281066"/>
<dbReference type="CTD" id="1020"/>
<dbReference type="VEuPathDB" id="HostDB:ENSBTAG00000007766"/>
<dbReference type="eggNOG" id="KOG0662">
    <property type="taxonomic scope" value="Eukaryota"/>
</dbReference>
<dbReference type="HOGENOM" id="CLU_000288_181_1_1"/>
<dbReference type="InParanoid" id="Q02399"/>
<dbReference type="OMA" id="NWQIFVP"/>
<dbReference type="OrthoDB" id="1732493at2759"/>
<dbReference type="TreeFam" id="TF101023"/>
<dbReference type="BRENDA" id="2.7.11.22">
    <property type="organism ID" value="908"/>
</dbReference>
<dbReference type="Reactome" id="R-BTA-180024">
    <property type="pathway name" value="DARPP-32 events"/>
</dbReference>
<dbReference type="Reactome" id="R-BTA-399956">
    <property type="pathway name" value="CRMPs in Sema3A signaling"/>
</dbReference>
<dbReference type="Reactome" id="R-BTA-6804756">
    <property type="pathway name" value="Regulation of TP53 Activity through Phosphorylation"/>
</dbReference>
<dbReference type="Reactome" id="R-BTA-9841922">
    <property type="pathway name" value="MLL4 and MLL3 complexes regulate expression of PPARG target genes in adipogenesis and hepatic steatosis"/>
</dbReference>
<dbReference type="Proteomes" id="UP000009136">
    <property type="component" value="Chromosome 4"/>
</dbReference>
<dbReference type="Bgee" id="ENSBTAG00000007766">
    <property type="expression patterns" value="Expressed in oocyte and 105 other cell types or tissues"/>
</dbReference>
<dbReference type="GO" id="GO:0030424">
    <property type="term" value="C:axon"/>
    <property type="evidence" value="ECO:0000250"/>
    <property type="project" value="AgBase"/>
</dbReference>
<dbReference type="GO" id="GO:0005737">
    <property type="term" value="C:cytoplasm"/>
    <property type="evidence" value="ECO:0000250"/>
    <property type="project" value="AgBase"/>
</dbReference>
<dbReference type="GO" id="GO:0005829">
    <property type="term" value="C:cytosol"/>
    <property type="evidence" value="ECO:0000250"/>
    <property type="project" value="AgBase"/>
</dbReference>
<dbReference type="GO" id="GO:0030425">
    <property type="term" value="C:dendrite"/>
    <property type="evidence" value="ECO:0000250"/>
    <property type="project" value="AgBase"/>
</dbReference>
<dbReference type="GO" id="GO:0030175">
    <property type="term" value="C:filopodium"/>
    <property type="evidence" value="ECO:0000250"/>
    <property type="project" value="AgBase"/>
</dbReference>
<dbReference type="GO" id="GO:0030426">
    <property type="term" value="C:growth cone"/>
    <property type="evidence" value="ECO:0000250"/>
    <property type="project" value="AgBase"/>
</dbReference>
<dbReference type="GO" id="GO:0030027">
    <property type="term" value="C:lamellipodium"/>
    <property type="evidence" value="ECO:0000250"/>
    <property type="project" value="AgBase"/>
</dbReference>
<dbReference type="GO" id="GO:0016020">
    <property type="term" value="C:membrane"/>
    <property type="evidence" value="ECO:0000250"/>
    <property type="project" value="AgBase"/>
</dbReference>
<dbReference type="GO" id="GO:0031594">
    <property type="term" value="C:neuromuscular junction"/>
    <property type="evidence" value="ECO:0000250"/>
    <property type="project" value="AgBase"/>
</dbReference>
<dbReference type="GO" id="GO:0043025">
    <property type="term" value="C:neuronal cell body"/>
    <property type="evidence" value="ECO:0000250"/>
    <property type="project" value="AgBase"/>
</dbReference>
<dbReference type="GO" id="GO:0005634">
    <property type="term" value="C:nucleus"/>
    <property type="evidence" value="ECO:0000250"/>
    <property type="project" value="AgBase"/>
</dbReference>
<dbReference type="GO" id="GO:0043204">
    <property type="term" value="C:perikaryon"/>
    <property type="evidence" value="ECO:0007669"/>
    <property type="project" value="UniProtKB-SubCell"/>
</dbReference>
<dbReference type="GO" id="GO:0005886">
    <property type="term" value="C:plasma membrane"/>
    <property type="evidence" value="ECO:0007669"/>
    <property type="project" value="UniProtKB-SubCell"/>
</dbReference>
<dbReference type="GO" id="GO:0014069">
    <property type="term" value="C:postsynaptic density"/>
    <property type="evidence" value="ECO:0000250"/>
    <property type="project" value="UniProtKB"/>
</dbReference>
<dbReference type="GO" id="GO:0030549">
    <property type="term" value="F:acetylcholine receptor activator activity"/>
    <property type="evidence" value="ECO:0000250"/>
    <property type="project" value="AgBase"/>
</dbReference>
<dbReference type="GO" id="GO:0005524">
    <property type="term" value="F:ATP binding"/>
    <property type="evidence" value="ECO:0007669"/>
    <property type="project" value="UniProtKB-KW"/>
</dbReference>
<dbReference type="GO" id="GO:0004693">
    <property type="term" value="F:cyclin-dependent protein serine/threonine kinase activity"/>
    <property type="evidence" value="ECO:0000250"/>
    <property type="project" value="UniProtKB"/>
</dbReference>
<dbReference type="GO" id="GO:0005176">
    <property type="term" value="F:ErbB-2 class receptor binding"/>
    <property type="evidence" value="ECO:0000250"/>
    <property type="project" value="AgBase"/>
</dbReference>
<dbReference type="GO" id="GO:0043125">
    <property type="term" value="F:ErbB-3 class receptor binding"/>
    <property type="evidence" value="ECO:0000250"/>
    <property type="project" value="UniProtKB"/>
</dbReference>
<dbReference type="GO" id="GO:0035173">
    <property type="term" value="F:histone kinase activity"/>
    <property type="evidence" value="ECO:0000304"/>
    <property type="project" value="UniProtKB"/>
</dbReference>
<dbReference type="GO" id="GO:0016301">
    <property type="term" value="F:kinase activity"/>
    <property type="evidence" value="ECO:0000250"/>
    <property type="project" value="AgBase"/>
</dbReference>
<dbReference type="GO" id="GO:0106310">
    <property type="term" value="F:protein serine kinase activity"/>
    <property type="evidence" value="ECO:0007669"/>
    <property type="project" value="RHEA"/>
</dbReference>
<dbReference type="GO" id="GO:0004674">
    <property type="term" value="F:protein serine/threonine kinase activity"/>
    <property type="evidence" value="ECO:0000250"/>
    <property type="project" value="AgBase"/>
</dbReference>
<dbReference type="GO" id="GO:0050321">
    <property type="term" value="F:tau-protein kinase activity"/>
    <property type="evidence" value="ECO:0000250"/>
    <property type="project" value="AgBase"/>
</dbReference>
<dbReference type="GO" id="GO:0007409">
    <property type="term" value="P:axonogenesis"/>
    <property type="evidence" value="ECO:0000250"/>
    <property type="project" value="AgBase"/>
</dbReference>
<dbReference type="GO" id="GO:0051301">
    <property type="term" value="P:cell division"/>
    <property type="evidence" value="ECO:0007669"/>
    <property type="project" value="UniProtKB-KW"/>
</dbReference>
<dbReference type="GO" id="GO:0016477">
    <property type="term" value="P:cell migration"/>
    <property type="evidence" value="ECO:0000250"/>
    <property type="project" value="AgBase"/>
</dbReference>
<dbReference type="GO" id="GO:0007160">
    <property type="term" value="P:cell-matrix adhesion"/>
    <property type="evidence" value="ECO:0000250"/>
    <property type="project" value="AgBase"/>
</dbReference>
<dbReference type="GO" id="GO:0051402">
    <property type="term" value="P:neuron apoptotic process"/>
    <property type="evidence" value="ECO:0000318"/>
    <property type="project" value="GO_Central"/>
</dbReference>
<dbReference type="GO" id="GO:0030182">
    <property type="term" value="P:neuron differentiation"/>
    <property type="evidence" value="ECO:0000250"/>
    <property type="project" value="AgBase"/>
</dbReference>
<dbReference type="GO" id="GO:0031175">
    <property type="term" value="P:neuron projection development"/>
    <property type="evidence" value="ECO:0000250"/>
    <property type="project" value="AgBase"/>
</dbReference>
<dbReference type="GO" id="GO:0043525">
    <property type="term" value="P:positive regulation of neuron apoptotic process"/>
    <property type="evidence" value="ECO:0000250"/>
    <property type="project" value="UniProtKB"/>
</dbReference>
<dbReference type="GO" id="GO:1901987">
    <property type="term" value="P:regulation of cell cycle phase transition"/>
    <property type="evidence" value="ECO:0000318"/>
    <property type="project" value="GO_Central"/>
</dbReference>
<dbReference type="GO" id="GO:0030334">
    <property type="term" value="P:regulation of cell migration"/>
    <property type="evidence" value="ECO:0000250"/>
    <property type="project" value="AgBase"/>
</dbReference>
<dbReference type="GO" id="GO:0061001">
    <property type="term" value="P:regulation of dendritic spine morphogenesis"/>
    <property type="evidence" value="ECO:0000250"/>
    <property type="project" value="UniProtKB"/>
</dbReference>
<dbReference type="GO" id="GO:0048167">
    <property type="term" value="P:regulation of synaptic plasticity"/>
    <property type="evidence" value="ECO:0000250"/>
    <property type="project" value="UniProtKB"/>
</dbReference>
<dbReference type="GO" id="GO:0048511">
    <property type="term" value="P:rhythmic process"/>
    <property type="evidence" value="ECO:0007669"/>
    <property type="project" value="UniProtKB-KW"/>
</dbReference>
<dbReference type="GO" id="GO:0048489">
    <property type="term" value="P:synaptic vesicle transport"/>
    <property type="evidence" value="ECO:0000318"/>
    <property type="project" value="GO_Central"/>
</dbReference>
<dbReference type="CDD" id="cd07839">
    <property type="entry name" value="STKc_CDK5"/>
    <property type="match status" value="1"/>
</dbReference>
<dbReference type="FunFam" id="3.30.200.20:FF:000144">
    <property type="entry name" value="Cyclin-dependent kinase 5"/>
    <property type="match status" value="1"/>
</dbReference>
<dbReference type="FunFam" id="1.10.510.10:FF:000184">
    <property type="entry name" value="cyclin-dependent kinase 5 homolog"/>
    <property type="match status" value="1"/>
</dbReference>
<dbReference type="Gene3D" id="3.30.200.20">
    <property type="entry name" value="Phosphorylase Kinase, domain 1"/>
    <property type="match status" value="1"/>
</dbReference>
<dbReference type="Gene3D" id="1.10.510.10">
    <property type="entry name" value="Transferase(Phosphotransferase) domain 1"/>
    <property type="match status" value="1"/>
</dbReference>
<dbReference type="InterPro" id="IPR050108">
    <property type="entry name" value="CDK"/>
</dbReference>
<dbReference type="InterPro" id="IPR011009">
    <property type="entry name" value="Kinase-like_dom_sf"/>
</dbReference>
<dbReference type="InterPro" id="IPR000719">
    <property type="entry name" value="Prot_kinase_dom"/>
</dbReference>
<dbReference type="InterPro" id="IPR017441">
    <property type="entry name" value="Protein_kinase_ATP_BS"/>
</dbReference>
<dbReference type="InterPro" id="IPR008271">
    <property type="entry name" value="Ser/Thr_kinase_AS"/>
</dbReference>
<dbReference type="PANTHER" id="PTHR24056">
    <property type="entry name" value="CELL DIVISION PROTEIN KINASE"/>
    <property type="match status" value="1"/>
</dbReference>
<dbReference type="PANTHER" id="PTHR24056:SF46">
    <property type="entry name" value="CYCLIN-DEPENDENT KINASE 5"/>
    <property type="match status" value="1"/>
</dbReference>
<dbReference type="Pfam" id="PF00069">
    <property type="entry name" value="Pkinase"/>
    <property type="match status" value="1"/>
</dbReference>
<dbReference type="SMART" id="SM00220">
    <property type="entry name" value="S_TKc"/>
    <property type="match status" value="1"/>
</dbReference>
<dbReference type="SUPFAM" id="SSF56112">
    <property type="entry name" value="Protein kinase-like (PK-like)"/>
    <property type="match status" value="1"/>
</dbReference>
<dbReference type="PROSITE" id="PS00107">
    <property type="entry name" value="PROTEIN_KINASE_ATP"/>
    <property type="match status" value="1"/>
</dbReference>
<dbReference type="PROSITE" id="PS50011">
    <property type="entry name" value="PROTEIN_KINASE_DOM"/>
    <property type="match status" value="1"/>
</dbReference>
<dbReference type="PROSITE" id="PS00108">
    <property type="entry name" value="PROTEIN_KINASE_ST"/>
    <property type="match status" value="1"/>
</dbReference>
<accession>Q02399</accession>
<accession>Q0VCN5</accession>
<accession>Q6LBE2</accession>